<organism>
    <name type="scientific">Persephonella marina (strain DSM 14350 / EX-H1)</name>
    <dbReference type="NCBI Taxonomy" id="123214"/>
    <lineage>
        <taxon>Bacteria</taxon>
        <taxon>Pseudomonadati</taxon>
        <taxon>Aquificota</taxon>
        <taxon>Aquificia</taxon>
        <taxon>Aquificales</taxon>
        <taxon>Hydrogenothermaceae</taxon>
        <taxon>Persephonella</taxon>
    </lineage>
</organism>
<dbReference type="EC" id="2.1.1.74" evidence="1"/>
<dbReference type="EMBL" id="CP001230">
    <property type="protein sequence ID" value="ACO03475.1"/>
    <property type="molecule type" value="Genomic_DNA"/>
</dbReference>
<dbReference type="RefSeq" id="WP_012675714.1">
    <property type="nucleotide sequence ID" value="NC_012440.1"/>
</dbReference>
<dbReference type="SMR" id="C0QTE2"/>
<dbReference type="STRING" id="123214.PERMA_0159"/>
<dbReference type="PaxDb" id="123214-PERMA_0159"/>
<dbReference type="KEGG" id="pmx:PERMA_0159"/>
<dbReference type="eggNOG" id="COG1206">
    <property type="taxonomic scope" value="Bacteria"/>
</dbReference>
<dbReference type="HOGENOM" id="CLU_033057_1_0_0"/>
<dbReference type="OrthoDB" id="9803114at2"/>
<dbReference type="Proteomes" id="UP000001366">
    <property type="component" value="Chromosome"/>
</dbReference>
<dbReference type="GO" id="GO:0005829">
    <property type="term" value="C:cytosol"/>
    <property type="evidence" value="ECO:0007669"/>
    <property type="project" value="TreeGrafter"/>
</dbReference>
<dbReference type="GO" id="GO:0050660">
    <property type="term" value="F:flavin adenine dinucleotide binding"/>
    <property type="evidence" value="ECO:0007669"/>
    <property type="project" value="UniProtKB-UniRule"/>
</dbReference>
<dbReference type="GO" id="GO:0047151">
    <property type="term" value="F:tRNA (uracil(54)-C5)-methyltransferase activity, 5,10-methylenetetrahydrofolate-dependent"/>
    <property type="evidence" value="ECO:0007669"/>
    <property type="project" value="UniProtKB-UniRule"/>
</dbReference>
<dbReference type="GO" id="GO:0030488">
    <property type="term" value="P:tRNA methylation"/>
    <property type="evidence" value="ECO:0007669"/>
    <property type="project" value="TreeGrafter"/>
</dbReference>
<dbReference type="GO" id="GO:0002098">
    <property type="term" value="P:tRNA wobble uridine modification"/>
    <property type="evidence" value="ECO:0007669"/>
    <property type="project" value="TreeGrafter"/>
</dbReference>
<dbReference type="Gene3D" id="3.50.50.60">
    <property type="entry name" value="FAD/NAD(P)-binding domain"/>
    <property type="match status" value="2"/>
</dbReference>
<dbReference type="HAMAP" id="MF_01037">
    <property type="entry name" value="TrmFO"/>
    <property type="match status" value="1"/>
</dbReference>
<dbReference type="InterPro" id="IPR036188">
    <property type="entry name" value="FAD/NAD-bd_sf"/>
</dbReference>
<dbReference type="InterPro" id="IPR002218">
    <property type="entry name" value="MnmG-rel"/>
</dbReference>
<dbReference type="InterPro" id="IPR020595">
    <property type="entry name" value="MnmG-rel_CS"/>
</dbReference>
<dbReference type="InterPro" id="IPR040131">
    <property type="entry name" value="MnmG_N"/>
</dbReference>
<dbReference type="InterPro" id="IPR004417">
    <property type="entry name" value="TrmFO"/>
</dbReference>
<dbReference type="NCBIfam" id="TIGR00137">
    <property type="entry name" value="gid_trmFO"/>
    <property type="match status" value="1"/>
</dbReference>
<dbReference type="NCBIfam" id="NF003739">
    <property type="entry name" value="PRK05335.1"/>
    <property type="match status" value="1"/>
</dbReference>
<dbReference type="PANTHER" id="PTHR11806">
    <property type="entry name" value="GLUCOSE INHIBITED DIVISION PROTEIN A"/>
    <property type="match status" value="1"/>
</dbReference>
<dbReference type="PANTHER" id="PTHR11806:SF2">
    <property type="entry name" value="METHYLENETETRAHYDROFOLATE--TRNA-(URACIL-5-)-METHYLTRANSFERASE TRMFO"/>
    <property type="match status" value="1"/>
</dbReference>
<dbReference type="Pfam" id="PF01134">
    <property type="entry name" value="GIDA"/>
    <property type="match status" value="1"/>
</dbReference>
<dbReference type="SUPFAM" id="SSF51905">
    <property type="entry name" value="FAD/NAD(P)-binding domain"/>
    <property type="match status" value="1"/>
</dbReference>
<dbReference type="PROSITE" id="PS01281">
    <property type="entry name" value="GIDA_2"/>
    <property type="match status" value="1"/>
</dbReference>
<reference key="1">
    <citation type="journal article" date="2009" name="J. Bacteriol.">
        <title>Complete and draft genome sequences of six members of the Aquificales.</title>
        <authorList>
            <person name="Reysenbach A.-L."/>
            <person name="Hamamura N."/>
            <person name="Podar M."/>
            <person name="Griffiths E."/>
            <person name="Ferreira S."/>
            <person name="Hochstein R."/>
            <person name="Heidelberg J."/>
            <person name="Johnson J."/>
            <person name="Mead D."/>
            <person name="Pohorille A."/>
            <person name="Sarmiento M."/>
            <person name="Schweighofer K."/>
            <person name="Seshadri R."/>
            <person name="Voytek M.A."/>
        </authorList>
    </citation>
    <scope>NUCLEOTIDE SEQUENCE [LARGE SCALE GENOMIC DNA]</scope>
    <source>
        <strain>DSM 14350 / EX-H1</strain>
    </source>
</reference>
<protein>
    <recommendedName>
        <fullName evidence="1">Methylenetetrahydrofolate--tRNA-(uracil-5-)-methyltransferase TrmFO</fullName>
        <ecNumber evidence="1">2.1.1.74</ecNumber>
    </recommendedName>
    <alternativeName>
        <fullName evidence="1">Folate-dependent tRNA (uracil-5-)-methyltransferase</fullName>
    </alternativeName>
    <alternativeName>
        <fullName evidence="1">Folate-dependent tRNA(M-5-U54)-methyltransferase</fullName>
    </alternativeName>
</protein>
<name>TRMFO_PERMH</name>
<sequence>MGKVAVIGAGLAGSEAAFKIATSGFKVDLYEMRPVKTTPAHRTEGFAELVCSNSLGGKDITTGSGLLKEEMRLLGSLIVSVAEEFSVPAGGALAVDRVKFSRRITEILENHPNIKVIRKEVTQLPEGYNFIIIATGPLTSEAFSKVIQRLTGSEYLYFYDAIAPTVDADTVDFSKGFWGDRYGKGKGDYFNCVLNEEEYEIFYNELINGKQVPLKDFEKAVFFEGCLPIEEMARRGKQTLLFGPMKPVGLIDPKTGKQPFAVIQLRKENREGTLLSLVGFQTKLKYPEQKRIFRLIPALKDATFVRLGSIHRNTFIQSHRVLKPTLQLKKDPRILFAGQITGVEGYAASAATGILAGINVVRMLKGKEPTVPPETTMLGGLVRYITEPKEELQPMNPNFSLLPDLDKKVRDKRRRKLLKAERALKDMEIFASQWKN</sequence>
<evidence type="ECO:0000255" key="1">
    <source>
        <dbReference type="HAMAP-Rule" id="MF_01037"/>
    </source>
</evidence>
<feature type="chain" id="PRO_1000149474" description="Methylenetetrahydrofolate--tRNA-(uracil-5-)-methyltransferase TrmFO">
    <location>
        <begin position="1"/>
        <end position="436"/>
    </location>
</feature>
<feature type="binding site" evidence="1">
    <location>
        <begin position="8"/>
        <end position="13"/>
    </location>
    <ligand>
        <name>FAD</name>
        <dbReference type="ChEBI" id="CHEBI:57692"/>
    </ligand>
</feature>
<accession>C0QTE2</accession>
<gene>
    <name evidence="1" type="primary">trmFO</name>
    <name type="ordered locus">PERMA_0159</name>
</gene>
<keyword id="KW-0963">Cytoplasm</keyword>
<keyword id="KW-0274">FAD</keyword>
<keyword id="KW-0285">Flavoprotein</keyword>
<keyword id="KW-0489">Methyltransferase</keyword>
<keyword id="KW-0520">NAD</keyword>
<keyword id="KW-0521">NADP</keyword>
<keyword id="KW-1185">Reference proteome</keyword>
<keyword id="KW-0808">Transferase</keyword>
<keyword id="KW-0819">tRNA processing</keyword>
<comment type="function">
    <text evidence="1">Catalyzes the folate-dependent formation of 5-methyl-uridine at position 54 (M-5-U54) in all tRNAs.</text>
</comment>
<comment type="catalytic activity">
    <reaction evidence="1">
        <text>uridine(54) in tRNA + (6R)-5,10-methylene-5,6,7,8-tetrahydrofolate + NADH + H(+) = 5-methyluridine(54) in tRNA + (6S)-5,6,7,8-tetrahydrofolate + NAD(+)</text>
        <dbReference type="Rhea" id="RHEA:16873"/>
        <dbReference type="Rhea" id="RHEA-COMP:10167"/>
        <dbReference type="Rhea" id="RHEA-COMP:10193"/>
        <dbReference type="ChEBI" id="CHEBI:15378"/>
        <dbReference type="ChEBI" id="CHEBI:15636"/>
        <dbReference type="ChEBI" id="CHEBI:57453"/>
        <dbReference type="ChEBI" id="CHEBI:57540"/>
        <dbReference type="ChEBI" id="CHEBI:57945"/>
        <dbReference type="ChEBI" id="CHEBI:65315"/>
        <dbReference type="ChEBI" id="CHEBI:74447"/>
        <dbReference type="EC" id="2.1.1.74"/>
    </reaction>
</comment>
<comment type="catalytic activity">
    <reaction evidence="1">
        <text>uridine(54) in tRNA + (6R)-5,10-methylene-5,6,7,8-tetrahydrofolate + NADPH + H(+) = 5-methyluridine(54) in tRNA + (6S)-5,6,7,8-tetrahydrofolate + NADP(+)</text>
        <dbReference type="Rhea" id="RHEA:62372"/>
        <dbReference type="Rhea" id="RHEA-COMP:10167"/>
        <dbReference type="Rhea" id="RHEA-COMP:10193"/>
        <dbReference type="ChEBI" id="CHEBI:15378"/>
        <dbReference type="ChEBI" id="CHEBI:15636"/>
        <dbReference type="ChEBI" id="CHEBI:57453"/>
        <dbReference type="ChEBI" id="CHEBI:57783"/>
        <dbReference type="ChEBI" id="CHEBI:58349"/>
        <dbReference type="ChEBI" id="CHEBI:65315"/>
        <dbReference type="ChEBI" id="CHEBI:74447"/>
        <dbReference type="EC" id="2.1.1.74"/>
    </reaction>
</comment>
<comment type="cofactor">
    <cofactor evidence="1">
        <name>FAD</name>
        <dbReference type="ChEBI" id="CHEBI:57692"/>
    </cofactor>
</comment>
<comment type="subcellular location">
    <subcellularLocation>
        <location evidence="1">Cytoplasm</location>
    </subcellularLocation>
</comment>
<comment type="similarity">
    <text evidence="1">Belongs to the MnmG family. TrmFO subfamily.</text>
</comment>
<proteinExistence type="inferred from homology"/>